<accession>Q63GI2</accession>
<name>SYP2_BACCZ</name>
<comment type="function">
    <text evidence="1">Catalyzes the attachment of proline to tRNA(Pro) in a two-step reaction: proline is first activated by ATP to form Pro-AMP and then transferred to the acceptor end of tRNA(Pro).</text>
</comment>
<comment type="catalytic activity">
    <reaction evidence="1">
        <text>tRNA(Pro) + L-proline + ATP = L-prolyl-tRNA(Pro) + AMP + diphosphate</text>
        <dbReference type="Rhea" id="RHEA:14305"/>
        <dbReference type="Rhea" id="RHEA-COMP:9700"/>
        <dbReference type="Rhea" id="RHEA-COMP:9702"/>
        <dbReference type="ChEBI" id="CHEBI:30616"/>
        <dbReference type="ChEBI" id="CHEBI:33019"/>
        <dbReference type="ChEBI" id="CHEBI:60039"/>
        <dbReference type="ChEBI" id="CHEBI:78442"/>
        <dbReference type="ChEBI" id="CHEBI:78532"/>
        <dbReference type="ChEBI" id="CHEBI:456215"/>
        <dbReference type="EC" id="6.1.1.15"/>
    </reaction>
</comment>
<comment type="subunit">
    <text evidence="1">Homodimer.</text>
</comment>
<comment type="subcellular location">
    <subcellularLocation>
        <location evidence="1">Cytoplasm</location>
    </subcellularLocation>
</comment>
<comment type="domain">
    <text evidence="1">Consists of three domains: the N-terminal catalytic domain, the anticodon-binding domain and the C-terminal extension.</text>
</comment>
<comment type="similarity">
    <text evidence="1">Belongs to the class-II aminoacyl-tRNA synthetase family. ProS type 3 subfamily.</text>
</comment>
<comment type="sequence caution" evidence="2">
    <conflict type="erroneous initiation">
        <sequence resource="EMBL-CDS" id="AAU19870"/>
    </conflict>
</comment>
<keyword id="KW-0030">Aminoacyl-tRNA synthetase</keyword>
<keyword id="KW-0067">ATP-binding</keyword>
<keyword id="KW-0963">Cytoplasm</keyword>
<keyword id="KW-0436">Ligase</keyword>
<keyword id="KW-0547">Nucleotide-binding</keyword>
<keyword id="KW-0648">Protein biosynthesis</keyword>
<proteinExistence type="inferred from homology"/>
<reference key="1">
    <citation type="journal article" date="2006" name="J. Bacteriol.">
        <title>Pathogenomic sequence analysis of Bacillus cereus and Bacillus thuringiensis isolates closely related to Bacillus anthracis.</title>
        <authorList>
            <person name="Han C.S."/>
            <person name="Xie G."/>
            <person name="Challacombe J.F."/>
            <person name="Altherr M.R."/>
            <person name="Bhotika S.S."/>
            <person name="Bruce D."/>
            <person name="Campbell C.S."/>
            <person name="Campbell M.L."/>
            <person name="Chen J."/>
            <person name="Chertkov O."/>
            <person name="Cleland C."/>
            <person name="Dimitrijevic M."/>
            <person name="Doggett N.A."/>
            <person name="Fawcett J.J."/>
            <person name="Glavina T."/>
            <person name="Goodwin L.A."/>
            <person name="Hill K.K."/>
            <person name="Hitchcock P."/>
            <person name="Jackson P.J."/>
            <person name="Keim P."/>
            <person name="Kewalramani A.R."/>
            <person name="Longmire J."/>
            <person name="Lucas S."/>
            <person name="Malfatti S."/>
            <person name="McMurry K."/>
            <person name="Meincke L.J."/>
            <person name="Misra M."/>
            <person name="Moseman B.L."/>
            <person name="Mundt M."/>
            <person name="Munk A.C."/>
            <person name="Okinaka R.T."/>
            <person name="Parson-Quintana B."/>
            <person name="Reilly L.P."/>
            <person name="Richardson P."/>
            <person name="Robinson D.L."/>
            <person name="Rubin E."/>
            <person name="Saunders E."/>
            <person name="Tapia R."/>
            <person name="Tesmer J.G."/>
            <person name="Thayer N."/>
            <person name="Thompson L.S."/>
            <person name="Tice H."/>
            <person name="Ticknor L.O."/>
            <person name="Wills P.L."/>
            <person name="Brettin T.S."/>
            <person name="Gilna P."/>
        </authorList>
    </citation>
    <scope>NUCLEOTIDE SEQUENCE [LARGE SCALE GENOMIC DNA]</scope>
    <source>
        <strain>ZK / E33L</strain>
    </source>
</reference>
<protein>
    <recommendedName>
        <fullName evidence="1">Proline--tRNA ligase 2</fullName>
        <ecNumber evidence="1">6.1.1.15</ecNumber>
    </recommendedName>
    <alternativeName>
        <fullName evidence="1">Prolyl-tRNA synthetase 2</fullName>
        <shortName evidence="1">ProRS 2</shortName>
    </alternativeName>
</protein>
<feature type="chain" id="PRO_0000249119" description="Proline--tRNA ligase 2">
    <location>
        <begin position="1"/>
        <end position="476"/>
    </location>
</feature>
<dbReference type="EC" id="6.1.1.15" evidence="1"/>
<dbReference type="EMBL" id="CP000001">
    <property type="protein sequence ID" value="AAU19870.1"/>
    <property type="status" value="ALT_INIT"/>
    <property type="molecule type" value="Genomic_DNA"/>
</dbReference>
<dbReference type="RefSeq" id="WP_001040953.1">
    <property type="nucleotide sequence ID" value="NC_006274.1"/>
</dbReference>
<dbReference type="SMR" id="Q63GI2"/>
<dbReference type="KEGG" id="bcz:BCE33L0370"/>
<dbReference type="PATRIC" id="fig|288681.22.peg.5233"/>
<dbReference type="Proteomes" id="UP000002612">
    <property type="component" value="Chromosome"/>
</dbReference>
<dbReference type="GO" id="GO:0017101">
    <property type="term" value="C:aminoacyl-tRNA synthetase multienzyme complex"/>
    <property type="evidence" value="ECO:0007669"/>
    <property type="project" value="TreeGrafter"/>
</dbReference>
<dbReference type="GO" id="GO:0005737">
    <property type="term" value="C:cytoplasm"/>
    <property type="evidence" value="ECO:0007669"/>
    <property type="project" value="UniProtKB-SubCell"/>
</dbReference>
<dbReference type="GO" id="GO:0005524">
    <property type="term" value="F:ATP binding"/>
    <property type="evidence" value="ECO:0007669"/>
    <property type="project" value="UniProtKB-UniRule"/>
</dbReference>
<dbReference type="GO" id="GO:0140096">
    <property type="term" value="F:catalytic activity, acting on a protein"/>
    <property type="evidence" value="ECO:0007669"/>
    <property type="project" value="UniProtKB-ARBA"/>
</dbReference>
<dbReference type="GO" id="GO:0004827">
    <property type="term" value="F:proline-tRNA ligase activity"/>
    <property type="evidence" value="ECO:0007669"/>
    <property type="project" value="UniProtKB-UniRule"/>
</dbReference>
<dbReference type="GO" id="GO:0016740">
    <property type="term" value="F:transferase activity"/>
    <property type="evidence" value="ECO:0007669"/>
    <property type="project" value="UniProtKB-ARBA"/>
</dbReference>
<dbReference type="GO" id="GO:0006433">
    <property type="term" value="P:prolyl-tRNA aminoacylation"/>
    <property type="evidence" value="ECO:0007669"/>
    <property type="project" value="UniProtKB-UniRule"/>
</dbReference>
<dbReference type="CDD" id="cd00862">
    <property type="entry name" value="ProRS_anticodon_zinc"/>
    <property type="match status" value="1"/>
</dbReference>
<dbReference type="CDD" id="cd00778">
    <property type="entry name" value="ProRS_core_arch_euk"/>
    <property type="match status" value="1"/>
</dbReference>
<dbReference type="FunFam" id="3.40.50.800:FF:000005">
    <property type="entry name" value="bifunctional glutamate/proline--tRNA ligase"/>
    <property type="match status" value="1"/>
</dbReference>
<dbReference type="FunFam" id="3.30.110.30:FF:000005">
    <property type="entry name" value="Proline--tRNA ligase"/>
    <property type="match status" value="1"/>
</dbReference>
<dbReference type="FunFam" id="3.30.930.10:FF:000023">
    <property type="entry name" value="Proline--tRNA ligase"/>
    <property type="match status" value="1"/>
</dbReference>
<dbReference type="Gene3D" id="3.40.50.800">
    <property type="entry name" value="Anticodon-binding domain"/>
    <property type="match status" value="1"/>
</dbReference>
<dbReference type="Gene3D" id="3.30.930.10">
    <property type="entry name" value="Bira Bifunctional Protein, Domain 2"/>
    <property type="match status" value="1"/>
</dbReference>
<dbReference type="Gene3D" id="3.30.110.30">
    <property type="entry name" value="C-terminal domain of ProRS"/>
    <property type="match status" value="1"/>
</dbReference>
<dbReference type="HAMAP" id="MF_01571">
    <property type="entry name" value="Pro_tRNA_synth_type3"/>
    <property type="match status" value="1"/>
</dbReference>
<dbReference type="InterPro" id="IPR002314">
    <property type="entry name" value="aa-tRNA-synt_IIb"/>
</dbReference>
<dbReference type="InterPro" id="IPR006195">
    <property type="entry name" value="aa-tRNA-synth_II"/>
</dbReference>
<dbReference type="InterPro" id="IPR045864">
    <property type="entry name" value="aa-tRNA-synth_II/BPL/LPL"/>
</dbReference>
<dbReference type="InterPro" id="IPR004154">
    <property type="entry name" value="Anticodon-bd"/>
</dbReference>
<dbReference type="InterPro" id="IPR036621">
    <property type="entry name" value="Anticodon-bd_dom_sf"/>
</dbReference>
<dbReference type="InterPro" id="IPR002316">
    <property type="entry name" value="Pro-tRNA-ligase_IIa"/>
</dbReference>
<dbReference type="InterPro" id="IPR004499">
    <property type="entry name" value="Pro-tRNA-ligase_IIa_arc-type"/>
</dbReference>
<dbReference type="InterPro" id="IPR016061">
    <property type="entry name" value="Pro-tRNA_ligase_II_C"/>
</dbReference>
<dbReference type="InterPro" id="IPR017449">
    <property type="entry name" value="Pro-tRNA_synth_II"/>
</dbReference>
<dbReference type="InterPro" id="IPR033721">
    <property type="entry name" value="ProRS_core_arch_euk"/>
</dbReference>
<dbReference type="NCBIfam" id="TIGR00408">
    <property type="entry name" value="proS_fam_I"/>
    <property type="match status" value="1"/>
</dbReference>
<dbReference type="PANTHER" id="PTHR43382:SF2">
    <property type="entry name" value="BIFUNCTIONAL GLUTAMATE_PROLINE--TRNA LIGASE"/>
    <property type="match status" value="1"/>
</dbReference>
<dbReference type="PANTHER" id="PTHR43382">
    <property type="entry name" value="PROLYL-TRNA SYNTHETASE"/>
    <property type="match status" value="1"/>
</dbReference>
<dbReference type="Pfam" id="PF03129">
    <property type="entry name" value="HGTP_anticodon"/>
    <property type="match status" value="1"/>
</dbReference>
<dbReference type="Pfam" id="PF09180">
    <property type="entry name" value="ProRS-C_1"/>
    <property type="match status" value="1"/>
</dbReference>
<dbReference type="Pfam" id="PF00587">
    <property type="entry name" value="tRNA-synt_2b"/>
    <property type="match status" value="1"/>
</dbReference>
<dbReference type="PRINTS" id="PR01046">
    <property type="entry name" value="TRNASYNTHPRO"/>
</dbReference>
<dbReference type="SMART" id="SM00946">
    <property type="entry name" value="ProRS-C_1"/>
    <property type="match status" value="1"/>
</dbReference>
<dbReference type="SUPFAM" id="SSF64586">
    <property type="entry name" value="C-terminal domain of ProRS"/>
    <property type="match status" value="1"/>
</dbReference>
<dbReference type="SUPFAM" id="SSF52954">
    <property type="entry name" value="Class II aaRS ABD-related"/>
    <property type="match status" value="1"/>
</dbReference>
<dbReference type="SUPFAM" id="SSF55681">
    <property type="entry name" value="Class II aaRS and biotin synthetases"/>
    <property type="match status" value="1"/>
</dbReference>
<dbReference type="PROSITE" id="PS50862">
    <property type="entry name" value="AA_TRNA_LIGASE_II"/>
    <property type="match status" value="1"/>
</dbReference>
<evidence type="ECO:0000255" key="1">
    <source>
        <dbReference type="HAMAP-Rule" id="MF_01571"/>
    </source>
</evidence>
<evidence type="ECO:0000305" key="2"/>
<gene>
    <name evidence="1" type="primary">proS2</name>
    <name type="ordered locus">BCE33L0370</name>
</gene>
<sequence length="476" mass="54665">MAKEQVQAITKMEEDFAQWYTDIVKKAELVDYSSVKGCMILRPYGYALWENMQKVMDEKLKATGHENVYMPMFIPESLLQKEKDHVEGFAPEVAWVTHGGDEKLAERLCIRPTSETLFCEHFSKIVQSYNDLPKLYNQWCSVVRWEKTTRPFLRTTEFLWQEGHTIHETAEESQAETLNILNLYASFCEDYLAIPVIKGQKTEKEKFAGAKATYTIESLMHDGKALQTGTSHNFGTNFSEAFDIKFLDRTGKWQYVHQTSWGVSTRMIGGLIMVHGDNNGLVMPPKVAPVQVVIVPIAQHKEGVLAKAIELQGHIQKVARVKIDASNKTPGWKFNEYEMKGIPIRLEVGPKDIEKNQVVLVRRDTKEKEFISMDQLEERIPALLEEIHNSLFNKAKVFRDENTYSVTNFEEMKKIADEKQGFIKAMWCGELACEEKLKEEVGVSSRCMPFEQEHLADECVCCGKEAKQMVYWGKAY</sequence>
<organism>
    <name type="scientific">Bacillus cereus (strain ZK / E33L)</name>
    <dbReference type="NCBI Taxonomy" id="288681"/>
    <lineage>
        <taxon>Bacteria</taxon>
        <taxon>Bacillati</taxon>
        <taxon>Bacillota</taxon>
        <taxon>Bacilli</taxon>
        <taxon>Bacillales</taxon>
        <taxon>Bacillaceae</taxon>
        <taxon>Bacillus</taxon>
        <taxon>Bacillus cereus group</taxon>
    </lineage>
</organism>